<gene>
    <name evidence="1" type="primary">kynB</name>
    <name type="ordered locus">BMA0353</name>
</gene>
<organism>
    <name type="scientific">Burkholderia mallei (strain ATCC 23344)</name>
    <dbReference type="NCBI Taxonomy" id="243160"/>
    <lineage>
        <taxon>Bacteria</taxon>
        <taxon>Pseudomonadati</taxon>
        <taxon>Pseudomonadota</taxon>
        <taxon>Betaproteobacteria</taxon>
        <taxon>Burkholderiales</taxon>
        <taxon>Burkholderiaceae</taxon>
        <taxon>Burkholderia</taxon>
        <taxon>pseudomallei group</taxon>
    </lineage>
</organism>
<feature type="chain" id="PRO_0000362108" description="Kynurenine formamidase">
    <location>
        <begin position="1"/>
        <end position="213"/>
    </location>
</feature>
<feature type="active site" description="Proton donor/acceptor" evidence="1">
    <location>
        <position position="58"/>
    </location>
</feature>
<feature type="binding site" evidence="1">
    <location>
        <position position="18"/>
    </location>
    <ligand>
        <name>substrate</name>
    </ligand>
</feature>
<feature type="binding site" evidence="1">
    <location>
        <position position="48"/>
    </location>
    <ligand>
        <name>Zn(2+)</name>
        <dbReference type="ChEBI" id="CHEBI:29105"/>
        <label>1</label>
    </ligand>
</feature>
<feature type="binding site" evidence="1">
    <location>
        <position position="52"/>
    </location>
    <ligand>
        <name>Zn(2+)</name>
        <dbReference type="ChEBI" id="CHEBI:29105"/>
        <label>1</label>
    </ligand>
</feature>
<feature type="binding site" evidence="1">
    <location>
        <position position="54"/>
    </location>
    <ligand>
        <name>Zn(2+)</name>
        <dbReference type="ChEBI" id="CHEBI:29105"/>
        <label>1</label>
    </ligand>
</feature>
<feature type="binding site" evidence="1">
    <location>
        <position position="54"/>
    </location>
    <ligand>
        <name>Zn(2+)</name>
        <dbReference type="ChEBI" id="CHEBI:29105"/>
        <label>2</label>
    </ligand>
</feature>
<feature type="binding site" evidence="1">
    <location>
        <position position="160"/>
    </location>
    <ligand>
        <name>Zn(2+)</name>
        <dbReference type="ChEBI" id="CHEBI:29105"/>
        <label>2</label>
    </ligand>
</feature>
<feature type="binding site" evidence="1">
    <location>
        <position position="172"/>
    </location>
    <ligand>
        <name>Zn(2+)</name>
        <dbReference type="ChEBI" id="CHEBI:29105"/>
        <label>1</label>
    </ligand>
</feature>
<feature type="binding site" evidence="1">
    <location>
        <position position="172"/>
    </location>
    <ligand>
        <name>Zn(2+)</name>
        <dbReference type="ChEBI" id="CHEBI:29105"/>
        <label>2</label>
    </ligand>
</feature>
<evidence type="ECO:0000255" key="1">
    <source>
        <dbReference type="HAMAP-Rule" id="MF_01969"/>
    </source>
</evidence>
<dbReference type="EC" id="3.5.1.9" evidence="1"/>
<dbReference type="EMBL" id="CP000010">
    <property type="protein sequence ID" value="AAU49156.1"/>
    <property type="molecule type" value="Genomic_DNA"/>
</dbReference>
<dbReference type="RefSeq" id="WP_004198883.1">
    <property type="nucleotide sequence ID" value="NC_006348.1"/>
</dbReference>
<dbReference type="RefSeq" id="YP_102171.1">
    <property type="nucleotide sequence ID" value="NC_006348.1"/>
</dbReference>
<dbReference type="SMR" id="Q62M97"/>
<dbReference type="GeneID" id="92978123"/>
<dbReference type="KEGG" id="bma:BMA0353"/>
<dbReference type="PATRIC" id="fig|243160.12.peg.354"/>
<dbReference type="eggNOG" id="COG1878">
    <property type="taxonomic scope" value="Bacteria"/>
</dbReference>
<dbReference type="HOGENOM" id="CLU_030671_3_1_4"/>
<dbReference type="UniPathway" id="UPA00333">
    <property type="reaction ID" value="UER00454"/>
</dbReference>
<dbReference type="Proteomes" id="UP000006693">
    <property type="component" value="Chromosome 1"/>
</dbReference>
<dbReference type="GO" id="GO:0004061">
    <property type="term" value="F:arylformamidase activity"/>
    <property type="evidence" value="ECO:0000250"/>
    <property type="project" value="UniProtKB"/>
</dbReference>
<dbReference type="GO" id="GO:0004328">
    <property type="term" value="F:formamidase activity"/>
    <property type="evidence" value="ECO:0007669"/>
    <property type="project" value="InterPro"/>
</dbReference>
<dbReference type="GO" id="GO:0008270">
    <property type="term" value="F:zinc ion binding"/>
    <property type="evidence" value="ECO:0007669"/>
    <property type="project" value="UniProtKB-UniRule"/>
</dbReference>
<dbReference type="GO" id="GO:0043420">
    <property type="term" value="P:anthranilate metabolic process"/>
    <property type="evidence" value="ECO:0000250"/>
    <property type="project" value="UniProtKB"/>
</dbReference>
<dbReference type="GO" id="GO:0019441">
    <property type="term" value="P:L-tryptophan catabolic process to kynurenine"/>
    <property type="evidence" value="ECO:0000250"/>
    <property type="project" value="UniProtKB"/>
</dbReference>
<dbReference type="FunFam" id="3.50.30.50:FF:000001">
    <property type="entry name" value="Kynurenine formamidase"/>
    <property type="match status" value="1"/>
</dbReference>
<dbReference type="Gene3D" id="3.50.30.50">
    <property type="entry name" value="Putative cyclase"/>
    <property type="match status" value="1"/>
</dbReference>
<dbReference type="HAMAP" id="MF_01969">
    <property type="entry name" value="KynB"/>
    <property type="match status" value="1"/>
</dbReference>
<dbReference type="InterPro" id="IPR007325">
    <property type="entry name" value="KFase/CYL"/>
</dbReference>
<dbReference type="InterPro" id="IPR037175">
    <property type="entry name" value="KFase_sf"/>
</dbReference>
<dbReference type="InterPro" id="IPR017484">
    <property type="entry name" value="Kynurenine_formamidase_bac"/>
</dbReference>
<dbReference type="NCBIfam" id="TIGR03035">
    <property type="entry name" value="trp_arylform"/>
    <property type="match status" value="1"/>
</dbReference>
<dbReference type="PANTHER" id="PTHR31118">
    <property type="entry name" value="CYCLASE-LIKE PROTEIN 2"/>
    <property type="match status" value="1"/>
</dbReference>
<dbReference type="PANTHER" id="PTHR31118:SF32">
    <property type="entry name" value="KYNURENINE FORMAMIDASE"/>
    <property type="match status" value="1"/>
</dbReference>
<dbReference type="Pfam" id="PF04199">
    <property type="entry name" value="Cyclase"/>
    <property type="match status" value="1"/>
</dbReference>
<dbReference type="SUPFAM" id="SSF102198">
    <property type="entry name" value="Putative cyclase"/>
    <property type="match status" value="1"/>
</dbReference>
<proteinExistence type="inferred from homology"/>
<accession>Q62M97</accession>
<protein>
    <recommendedName>
        <fullName evidence="1">Kynurenine formamidase</fullName>
        <shortName evidence="1">KFA</shortName>
        <shortName evidence="1">KFase</shortName>
        <ecNumber evidence="1">3.5.1.9</ecNumber>
    </recommendedName>
    <alternativeName>
        <fullName evidence="1">Arylformamidase</fullName>
    </alternativeName>
    <alternativeName>
        <fullName evidence="1">N-formylkynurenine formamidase</fullName>
        <shortName evidence="1">FKF</shortName>
    </alternativeName>
</protein>
<keyword id="KW-0378">Hydrolase</keyword>
<keyword id="KW-0479">Metal-binding</keyword>
<keyword id="KW-1185">Reference proteome</keyword>
<keyword id="KW-0823">Tryptophan catabolism</keyword>
<keyword id="KW-0862">Zinc</keyword>
<comment type="function">
    <text evidence="1">Catalyzes the hydrolysis of N-formyl-L-kynurenine to L-kynurenine, the second step in the kynurenine pathway of tryptophan degradation.</text>
</comment>
<comment type="catalytic activity">
    <reaction evidence="1">
        <text>N-formyl-L-kynurenine + H2O = L-kynurenine + formate + H(+)</text>
        <dbReference type="Rhea" id="RHEA:13009"/>
        <dbReference type="ChEBI" id="CHEBI:15377"/>
        <dbReference type="ChEBI" id="CHEBI:15378"/>
        <dbReference type="ChEBI" id="CHEBI:15740"/>
        <dbReference type="ChEBI" id="CHEBI:57959"/>
        <dbReference type="ChEBI" id="CHEBI:58629"/>
        <dbReference type="EC" id="3.5.1.9"/>
    </reaction>
</comment>
<comment type="cofactor">
    <cofactor evidence="1">
        <name>Zn(2+)</name>
        <dbReference type="ChEBI" id="CHEBI:29105"/>
    </cofactor>
    <text evidence="1">Binds 2 zinc ions per subunit.</text>
</comment>
<comment type="pathway">
    <text evidence="1">Amino-acid degradation; L-tryptophan degradation via kynurenine pathway; L-kynurenine from L-tryptophan: step 2/2.</text>
</comment>
<comment type="subunit">
    <text evidence="1">Homodimer.</text>
</comment>
<comment type="similarity">
    <text evidence="1">Belongs to the Cyclase 1 superfamily. KynB family.</text>
</comment>
<name>KYNB_BURMA</name>
<reference key="1">
    <citation type="journal article" date="2004" name="Proc. Natl. Acad. Sci. U.S.A.">
        <title>Structural flexibility in the Burkholderia mallei genome.</title>
        <authorList>
            <person name="Nierman W.C."/>
            <person name="DeShazer D."/>
            <person name="Kim H.S."/>
            <person name="Tettelin H."/>
            <person name="Nelson K.E."/>
            <person name="Feldblyum T.V."/>
            <person name="Ulrich R.L."/>
            <person name="Ronning C.M."/>
            <person name="Brinkac L.M."/>
            <person name="Daugherty S.C."/>
            <person name="Davidsen T.D."/>
            <person name="DeBoy R.T."/>
            <person name="Dimitrov G."/>
            <person name="Dodson R.J."/>
            <person name="Durkin A.S."/>
            <person name="Gwinn M.L."/>
            <person name="Haft D.H."/>
            <person name="Khouri H.M."/>
            <person name="Kolonay J.F."/>
            <person name="Madupu R."/>
            <person name="Mohammoud Y."/>
            <person name="Nelson W.C."/>
            <person name="Radune D."/>
            <person name="Romero C.M."/>
            <person name="Sarria S."/>
            <person name="Selengut J."/>
            <person name="Shamblin C."/>
            <person name="Sullivan S.A."/>
            <person name="White O."/>
            <person name="Yu Y."/>
            <person name="Zafar N."/>
            <person name="Zhou L."/>
            <person name="Fraser C.M."/>
        </authorList>
    </citation>
    <scope>NUCLEOTIDE SEQUENCE [LARGE SCALE GENOMIC DNA]</scope>
    <source>
        <strain>ATCC 23344</strain>
    </source>
</reference>
<sequence>MDTIWDISPPIAPATPVWPGDTPVGIERVWRIEAGSPVNVARVTLSPHTGAHADAPLHYDADGTPIGAVPLDAYLGRCRVIHCIGARSAVTPEHVRAALAGAPPRVLLRTYGQAPQHAWDSAFCAVAPETIDLLAAHGVRLVGIDTPSLDPQESKTMDAHRRIRAHRMAILEGLVLDEIAAGDYELIALPLKFATLDASPVRAVLRALPAAPR</sequence>